<name>LEU1_XYLFT</name>
<reference key="1">
    <citation type="journal article" date="2003" name="J. Bacteriol.">
        <title>Comparative analyses of the complete genome sequences of Pierce's disease and citrus variegated chlorosis strains of Xylella fastidiosa.</title>
        <authorList>
            <person name="Van Sluys M.A."/>
            <person name="de Oliveira M.C."/>
            <person name="Monteiro-Vitorello C.B."/>
            <person name="Miyaki C.Y."/>
            <person name="Furlan L.R."/>
            <person name="Camargo L.E.A."/>
            <person name="da Silva A.C.R."/>
            <person name="Moon D.H."/>
            <person name="Takita M.A."/>
            <person name="Lemos E.G.M."/>
            <person name="Machado M.A."/>
            <person name="Ferro M.I.T."/>
            <person name="da Silva F.R."/>
            <person name="Goldman M.H.S."/>
            <person name="Goldman G.H."/>
            <person name="Lemos M.V.F."/>
            <person name="El-Dorry H."/>
            <person name="Tsai S.M."/>
            <person name="Carrer H."/>
            <person name="Carraro D.M."/>
            <person name="de Oliveira R.C."/>
            <person name="Nunes L.R."/>
            <person name="Siqueira W.J."/>
            <person name="Coutinho L.L."/>
            <person name="Kimura E.T."/>
            <person name="Ferro E.S."/>
            <person name="Harakava R."/>
            <person name="Kuramae E.E."/>
            <person name="Marino C.L."/>
            <person name="Giglioti E."/>
            <person name="Abreu I.L."/>
            <person name="Alves L.M.C."/>
            <person name="do Amaral A.M."/>
            <person name="Baia G.S."/>
            <person name="Blanco S.R."/>
            <person name="Brito M.S."/>
            <person name="Cannavan F.S."/>
            <person name="Celestino A.V."/>
            <person name="da Cunha A.F."/>
            <person name="Fenille R.C."/>
            <person name="Ferro J.A."/>
            <person name="Formighieri E.F."/>
            <person name="Kishi L.T."/>
            <person name="Leoni S.G."/>
            <person name="Oliveira A.R."/>
            <person name="Rosa V.E. Jr."/>
            <person name="Sassaki F.T."/>
            <person name="Sena J.A.D."/>
            <person name="de Souza A.A."/>
            <person name="Truffi D."/>
            <person name="Tsukumo F."/>
            <person name="Yanai G.M."/>
            <person name="Zaros L.G."/>
            <person name="Civerolo E.L."/>
            <person name="Simpson A.J.G."/>
            <person name="Almeida N.F. Jr."/>
            <person name="Setubal J.C."/>
            <person name="Kitajima J.P."/>
        </authorList>
    </citation>
    <scope>NUCLEOTIDE SEQUENCE [LARGE SCALE GENOMIC DNA]</scope>
    <source>
        <strain>Temecula1 / ATCC 700964</strain>
    </source>
</reference>
<dbReference type="EC" id="2.3.3.13" evidence="1"/>
<dbReference type="EMBL" id="AE009442">
    <property type="protein sequence ID" value="AAO28907.1"/>
    <property type="molecule type" value="Genomic_DNA"/>
</dbReference>
<dbReference type="RefSeq" id="WP_011097913.1">
    <property type="nucleotide sequence ID" value="NC_004556.1"/>
</dbReference>
<dbReference type="SMR" id="Q87CL8"/>
<dbReference type="KEGG" id="xft:PD_1047"/>
<dbReference type="HOGENOM" id="CLU_022158_0_1_6"/>
<dbReference type="UniPathway" id="UPA00048">
    <property type="reaction ID" value="UER00070"/>
</dbReference>
<dbReference type="Proteomes" id="UP000002516">
    <property type="component" value="Chromosome"/>
</dbReference>
<dbReference type="GO" id="GO:0005829">
    <property type="term" value="C:cytosol"/>
    <property type="evidence" value="ECO:0007669"/>
    <property type="project" value="TreeGrafter"/>
</dbReference>
<dbReference type="GO" id="GO:0003852">
    <property type="term" value="F:2-isopropylmalate synthase activity"/>
    <property type="evidence" value="ECO:0007669"/>
    <property type="project" value="UniProtKB-UniRule"/>
</dbReference>
<dbReference type="GO" id="GO:0003985">
    <property type="term" value="F:acetyl-CoA C-acetyltransferase activity"/>
    <property type="evidence" value="ECO:0007669"/>
    <property type="project" value="UniProtKB-UniRule"/>
</dbReference>
<dbReference type="GO" id="GO:0030145">
    <property type="term" value="F:manganese ion binding"/>
    <property type="evidence" value="ECO:0007669"/>
    <property type="project" value="UniProtKB-UniRule"/>
</dbReference>
<dbReference type="GO" id="GO:0009098">
    <property type="term" value="P:L-leucine biosynthetic process"/>
    <property type="evidence" value="ECO:0007669"/>
    <property type="project" value="UniProtKB-UniRule"/>
</dbReference>
<dbReference type="CDD" id="cd07940">
    <property type="entry name" value="DRE_TIM_IPMS"/>
    <property type="match status" value="1"/>
</dbReference>
<dbReference type="FunFam" id="3.20.20.70:FF:000010">
    <property type="entry name" value="2-isopropylmalate synthase"/>
    <property type="match status" value="1"/>
</dbReference>
<dbReference type="FunFam" id="3.30.160.270:FF:000003">
    <property type="entry name" value="2-isopropylmalate synthase"/>
    <property type="match status" value="1"/>
</dbReference>
<dbReference type="Gene3D" id="3.30.160.270">
    <property type="match status" value="1"/>
</dbReference>
<dbReference type="Gene3D" id="3.20.20.70">
    <property type="entry name" value="Aldolase class I"/>
    <property type="match status" value="1"/>
</dbReference>
<dbReference type="HAMAP" id="MF_01025">
    <property type="entry name" value="LeuA_type1"/>
    <property type="match status" value="1"/>
</dbReference>
<dbReference type="InterPro" id="IPR050073">
    <property type="entry name" value="2-IPM_HCS-like"/>
</dbReference>
<dbReference type="InterPro" id="IPR013709">
    <property type="entry name" value="2-isopropylmalate_synth_dimer"/>
</dbReference>
<dbReference type="InterPro" id="IPR002034">
    <property type="entry name" value="AIPM/Hcit_synth_CS"/>
</dbReference>
<dbReference type="InterPro" id="IPR013785">
    <property type="entry name" value="Aldolase_TIM"/>
</dbReference>
<dbReference type="InterPro" id="IPR054691">
    <property type="entry name" value="LeuA/HCS_post-cat"/>
</dbReference>
<dbReference type="InterPro" id="IPR036230">
    <property type="entry name" value="LeuA_allosteric_dom_sf"/>
</dbReference>
<dbReference type="InterPro" id="IPR005671">
    <property type="entry name" value="LeuA_bact_synth"/>
</dbReference>
<dbReference type="InterPro" id="IPR000891">
    <property type="entry name" value="PYR_CT"/>
</dbReference>
<dbReference type="NCBIfam" id="TIGR00973">
    <property type="entry name" value="leuA_bact"/>
    <property type="match status" value="1"/>
</dbReference>
<dbReference type="NCBIfam" id="NF002086">
    <property type="entry name" value="PRK00915.1-3"/>
    <property type="match status" value="1"/>
</dbReference>
<dbReference type="PANTHER" id="PTHR10277:SF9">
    <property type="entry name" value="2-ISOPROPYLMALATE SYNTHASE 1, CHLOROPLASTIC-RELATED"/>
    <property type="match status" value="1"/>
</dbReference>
<dbReference type="PANTHER" id="PTHR10277">
    <property type="entry name" value="HOMOCITRATE SYNTHASE-RELATED"/>
    <property type="match status" value="1"/>
</dbReference>
<dbReference type="Pfam" id="PF22617">
    <property type="entry name" value="HCS_D2"/>
    <property type="match status" value="1"/>
</dbReference>
<dbReference type="Pfam" id="PF00682">
    <property type="entry name" value="HMGL-like"/>
    <property type="match status" value="1"/>
</dbReference>
<dbReference type="Pfam" id="PF08502">
    <property type="entry name" value="LeuA_dimer"/>
    <property type="match status" value="1"/>
</dbReference>
<dbReference type="SMART" id="SM00917">
    <property type="entry name" value="LeuA_dimer"/>
    <property type="match status" value="1"/>
</dbReference>
<dbReference type="SUPFAM" id="SSF110921">
    <property type="entry name" value="2-isopropylmalate synthase LeuA, allosteric (dimerisation) domain"/>
    <property type="match status" value="1"/>
</dbReference>
<dbReference type="SUPFAM" id="SSF51569">
    <property type="entry name" value="Aldolase"/>
    <property type="match status" value="1"/>
</dbReference>
<dbReference type="PROSITE" id="PS00815">
    <property type="entry name" value="AIPM_HOMOCIT_SYNTH_1"/>
    <property type="match status" value="1"/>
</dbReference>
<dbReference type="PROSITE" id="PS00816">
    <property type="entry name" value="AIPM_HOMOCIT_SYNTH_2"/>
    <property type="match status" value="1"/>
</dbReference>
<dbReference type="PROSITE" id="PS50991">
    <property type="entry name" value="PYR_CT"/>
    <property type="match status" value="1"/>
</dbReference>
<accession>Q87CL8</accession>
<organism>
    <name type="scientific">Xylella fastidiosa (strain Temecula1 / ATCC 700964)</name>
    <dbReference type="NCBI Taxonomy" id="183190"/>
    <lineage>
        <taxon>Bacteria</taxon>
        <taxon>Pseudomonadati</taxon>
        <taxon>Pseudomonadota</taxon>
        <taxon>Gammaproteobacteria</taxon>
        <taxon>Lysobacterales</taxon>
        <taxon>Lysobacteraceae</taxon>
        <taxon>Xylella</taxon>
    </lineage>
</organism>
<keyword id="KW-0028">Amino-acid biosynthesis</keyword>
<keyword id="KW-0100">Branched-chain amino acid biosynthesis</keyword>
<keyword id="KW-0963">Cytoplasm</keyword>
<keyword id="KW-0432">Leucine biosynthesis</keyword>
<keyword id="KW-0464">Manganese</keyword>
<keyword id="KW-0479">Metal-binding</keyword>
<keyword id="KW-1185">Reference proteome</keyword>
<keyword id="KW-0808">Transferase</keyword>
<proteinExistence type="inferred from homology"/>
<evidence type="ECO:0000255" key="1">
    <source>
        <dbReference type="HAMAP-Rule" id="MF_01025"/>
    </source>
</evidence>
<evidence type="ECO:0000305" key="2"/>
<comment type="function">
    <text evidence="1">Catalyzes the condensation of the acetyl group of acetyl-CoA with 3-methyl-2-oxobutanoate (2-ketoisovalerate) to form 3-carboxy-3-hydroxy-4-methylpentanoate (2-isopropylmalate).</text>
</comment>
<comment type="catalytic activity">
    <reaction evidence="1">
        <text>3-methyl-2-oxobutanoate + acetyl-CoA + H2O = (2S)-2-isopropylmalate + CoA + H(+)</text>
        <dbReference type="Rhea" id="RHEA:21524"/>
        <dbReference type="ChEBI" id="CHEBI:1178"/>
        <dbReference type="ChEBI" id="CHEBI:11851"/>
        <dbReference type="ChEBI" id="CHEBI:15377"/>
        <dbReference type="ChEBI" id="CHEBI:15378"/>
        <dbReference type="ChEBI" id="CHEBI:57287"/>
        <dbReference type="ChEBI" id="CHEBI:57288"/>
        <dbReference type="EC" id="2.3.3.13"/>
    </reaction>
</comment>
<comment type="cofactor">
    <cofactor evidence="1">
        <name>Mn(2+)</name>
        <dbReference type="ChEBI" id="CHEBI:29035"/>
    </cofactor>
</comment>
<comment type="pathway">
    <text evidence="1">Amino-acid biosynthesis; L-leucine biosynthesis; L-leucine from 3-methyl-2-oxobutanoate: step 1/4.</text>
</comment>
<comment type="subunit">
    <text evidence="1">Homodimer.</text>
</comment>
<comment type="subcellular location">
    <subcellularLocation>
        <location evidence="1">Cytoplasm</location>
    </subcellularLocation>
</comment>
<comment type="similarity">
    <text evidence="1 2">Belongs to the alpha-IPM synthase/homocitrate synthase family. LeuA type 1 subfamily.</text>
</comment>
<feature type="chain" id="PRO_0000140403" description="2-isopropylmalate synthase">
    <location>
        <begin position="1"/>
        <end position="519"/>
    </location>
</feature>
<feature type="domain" description="Pyruvate carboxyltransferase" evidence="1">
    <location>
        <begin position="12"/>
        <end position="274"/>
    </location>
</feature>
<feature type="region of interest" description="Regulatory domain" evidence="1">
    <location>
        <begin position="396"/>
        <end position="519"/>
    </location>
</feature>
<feature type="binding site" evidence="1">
    <location>
        <position position="21"/>
    </location>
    <ligand>
        <name>Mn(2+)</name>
        <dbReference type="ChEBI" id="CHEBI:29035"/>
    </ligand>
</feature>
<feature type="binding site" evidence="1">
    <location>
        <position position="209"/>
    </location>
    <ligand>
        <name>Mn(2+)</name>
        <dbReference type="ChEBI" id="CHEBI:29035"/>
    </ligand>
</feature>
<feature type="binding site" evidence="1">
    <location>
        <position position="211"/>
    </location>
    <ligand>
        <name>Mn(2+)</name>
        <dbReference type="ChEBI" id="CHEBI:29035"/>
    </ligand>
</feature>
<feature type="binding site" evidence="1">
    <location>
        <position position="245"/>
    </location>
    <ligand>
        <name>Mn(2+)</name>
        <dbReference type="ChEBI" id="CHEBI:29035"/>
    </ligand>
</feature>
<protein>
    <recommendedName>
        <fullName evidence="1">2-isopropylmalate synthase</fullName>
        <ecNumber evidence="1">2.3.3.13</ecNumber>
    </recommendedName>
    <alternativeName>
        <fullName evidence="1">Alpha-IPM synthase</fullName>
    </alternativeName>
    <alternativeName>
        <fullName evidence="1">Alpha-isopropylmalate synthase</fullName>
    </alternativeName>
</protein>
<sequence>MNTSISSQPPCIRIFDTTLRDGEQSPGCSMPAQQKLVMARALDALGVDIIETGFPASSQSDYEAMTLIARELRRPTLAVLSRCLQADIETSARALESATKPRLHVFLSTSPLHREHKLRMSKEQVLESVHKHVSLSRTLIDDVEFSAEDATRTEEDFLIEVTRVAIAAGATTINLPDTVGFSTPEEIRNMFTRVIANVEGANKVIFSAHCHDDLGLAVANSLAAIEGGARQIECTINGIGERAGNCALEELTMVLKVRNAFYNIDTSIHTSRIVSTSQLLQRLVGMPVQRNKAVVGANAFAHESGIHQHGMLRHRGTYEIMRPQEVGWVCSHMVLGRHSGRAAVEQRLRALGYLLEEEDLKLVFEEFKQLCEKQRLVTDVDLQVLMQDTTVQHGYRLASMTISDVGNRANALVELSDPQGQRVAETAQGNGPVDALFGALAAATGVKLELDSYQVHSVGIGADARGEANLSVRHNDTQYEGTGTSKDIIEASALAWLEVANRLLRNPENMQNKQNTALA</sequence>
<gene>
    <name evidence="1" type="primary">leuA</name>
    <name type="ordered locus">PD_1047</name>
</gene>